<reference key="1">
    <citation type="journal article" date="2005" name="Jpn. Agric. Res. Q.">
        <title>Genome sequence of Xanthomonas oryzae pv. oryzae suggests contribution of large numbers of effector genes and insertion sequences to its race diversity.</title>
        <authorList>
            <person name="Ochiai H."/>
            <person name="Inoue Y."/>
            <person name="Takeya M."/>
            <person name="Sasaki A."/>
            <person name="Kaku H."/>
        </authorList>
    </citation>
    <scope>NUCLEOTIDE SEQUENCE [LARGE SCALE GENOMIC DNA]</scope>
    <source>
        <strain>MAFF 311018</strain>
    </source>
</reference>
<proteinExistence type="inferred from homology"/>
<feature type="chain" id="PRO_0000263225" description="Aspartate/glutamate leucyltransferase">
    <location>
        <begin position="1"/>
        <end position="251"/>
    </location>
</feature>
<sequence>MAIHADTHDDLRLFQTGEHACGYWSDRRARDLVLDPHDPRLGAIYPQALAWGFRRSGDLVYRPHCERCRACVPVRIAVDAFHPDRSQRRCLTRNQDLVVRVVAAERTDEQLALYRQYLKYRHPGGGMDEHGATEFDQFLIGGWSHGRFLEIREPAIAHLPGRLLAVAVTDVTEHALSAVYTFYAPEAAARSLGTFAILQQIQWAQRERRAHVYLGYWIEGHAKMNYKRRFSALEAYDGRHWCDLPAHPSGT</sequence>
<accession>Q2P5C8</accession>
<keyword id="KW-0012">Acyltransferase</keyword>
<keyword id="KW-0963">Cytoplasm</keyword>
<keyword id="KW-0808">Transferase</keyword>
<dbReference type="EC" id="2.3.2.29" evidence="1"/>
<dbReference type="EMBL" id="AP008229">
    <property type="protein sequence ID" value="BAE68249.1"/>
    <property type="molecule type" value="Genomic_DNA"/>
</dbReference>
<dbReference type="SMR" id="Q2P5C8"/>
<dbReference type="KEGG" id="xom:XOO1494"/>
<dbReference type="HOGENOM" id="CLU_077607_0_0_6"/>
<dbReference type="GO" id="GO:0005737">
    <property type="term" value="C:cytoplasm"/>
    <property type="evidence" value="ECO:0007669"/>
    <property type="project" value="UniProtKB-SubCell"/>
</dbReference>
<dbReference type="GO" id="GO:0004057">
    <property type="term" value="F:arginyl-tRNA--protein transferase activity"/>
    <property type="evidence" value="ECO:0007669"/>
    <property type="project" value="InterPro"/>
</dbReference>
<dbReference type="GO" id="GO:0008914">
    <property type="term" value="F:leucyl-tRNA--protein transferase activity"/>
    <property type="evidence" value="ECO:0007669"/>
    <property type="project" value="UniProtKB-UniRule"/>
</dbReference>
<dbReference type="GO" id="GO:0071596">
    <property type="term" value="P:ubiquitin-dependent protein catabolic process via the N-end rule pathway"/>
    <property type="evidence" value="ECO:0007669"/>
    <property type="project" value="InterPro"/>
</dbReference>
<dbReference type="HAMAP" id="MF_00689">
    <property type="entry name" value="Bpt"/>
    <property type="match status" value="1"/>
</dbReference>
<dbReference type="InterPro" id="IPR016181">
    <property type="entry name" value="Acyl_CoA_acyltransferase"/>
</dbReference>
<dbReference type="InterPro" id="IPR017138">
    <property type="entry name" value="Asp_Glu_LeuTrfase"/>
</dbReference>
<dbReference type="InterPro" id="IPR030700">
    <property type="entry name" value="N-end_Aminoacyl_Trfase"/>
</dbReference>
<dbReference type="InterPro" id="IPR007472">
    <property type="entry name" value="N-end_Aminoacyl_Trfase_C"/>
</dbReference>
<dbReference type="InterPro" id="IPR007471">
    <property type="entry name" value="N-end_Aminoacyl_Trfase_N"/>
</dbReference>
<dbReference type="NCBIfam" id="NF002341">
    <property type="entry name" value="PRK01305.1-1"/>
    <property type="match status" value="1"/>
</dbReference>
<dbReference type="NCBIfam" id="NF002342">
    <property type="entry name" value="PRK01305.1-3"/>
    <property type="match status" value="1"/>
</dbReference>
<dbReference type="NCBIfam" id="NF002346">
    <property type="entry name" value="PRK01305.2-3"/>
    <property type="match status" value="1"/>
</dbReference>
<dbReference type="PANTHER" id="PTHR21367">
    <property type="entry name" value="ARGININE-TRNA-PROTEIN TRANSFERASE 1"/>
    <property type="match status" value="1"/>
</dbReference>
<dbReference type="PANTHER" id="PTHR21367:SF1">
    <property type="entry name" value="ARGINYL-TRNA--PROTEIN TRANSFERASE 1"/>
    <property type="match status" value="1"/>
</dbReference>
<dbReference type="Pfam" id="PF04377">
    <property type="entry name" value="ATE_C"/>
    <property type="match status" value="1"/>
</dbReference>
<dbReference type="Pfam" id="PF04376">
    <property type="entry name" value="ATE_N"/>
    <property type="match status" value="1"/>
</dbReference>
<dbReference type="PIRSF" id="PIRSF037208">
    <property type="entry name" value="ATE_pro_prd"/>
    <property type="match status" value="1"/>
</dbReference>
<dbReference type="SUPFAM" id="SSF55729">
    <property type="entry name" value="Acyl-CoA N-acyltransferases (Nat)"/>
    <property type="match status" value="1"/>
</dbReference>
<evidence type="ECO:0000255" key="1">
    <source>
        <dbReference type="HAMAP-Rule" id="MF_00689"/>
    </source>
</evidence>
<name>BPT_XANOM</name>
<protein>
    <recommendedName>
        <fullName evidence="1">Aspartate/glutamate leucyltransferase</fullName>
        <ecNumber evidence="1">2.3.2.29</ecNumber>
    </recommendedName>
</protein>
<comment type="function">
    <text evidence="1">Functions in the N-end rule pathway of protein degradation where it conjugates Leu from its aminoacyl-tRNA to the N-termini of proteins containing an N-terminal aspartate or glutamate.</text>
</comment>
<comment type="catalytic activity">
    <reaction evidence="1">
        <text>N-terminal L-glutamyl-[protein] + L-leucyl-tRNA(Leu) = N-terminal L-leucyl-L-glutamyl-[protein] + tRNA(Leu) + H(+)</text>
        <dbReference type="Rhea" id="RHEA:50412"/>
        <dbReference type="Rhea" id="RHEA-COMP:9613"/>
        <dbReference type="Rhea" id="RHEA-COMP:9622"/>
        <dbReference type="Rhea" id="RHEA-COMP:12664"/>
        <dbReference type="Rhea" id="RHEA-COMP:12668"/>
        <dbReference type="ChEBI" id="CHEBI:15378"/>
        <dbReference type="ChEBI" id="CHEBI:64721"/>
        <dbReference type="ChEBI" id="CHEBI:78442"/>
        <dbReference type="ChEBI" id="CHEBI:78494"/>
        <dbReference type="ChEBI" id="CHEBI:133041"/>
        <dbReference type="EC" id="2.3.2.29"/>
    </reaction>
</comment>
<comment type="catalytic activity">
    <reaction evidence="1">
        <text>N-terminal L-aspartyl-[protein] + L-leucyl-tRNA(Leu) = N-terminal L-leucyl-L-aspartyl-[protein] + tRNA(Leu) + H(+)</text>
        <dbReference type="Rhea" id="RHEA:50420"/>
        <dbReference type="Rhea" id="RHEA-COMP:9613"/>
        <dbReference type="Rhea" id="RHEA-COMP:9622"/>
        <dbReference type="Rhea" id="RHEA-COMP:12669"/>
        <dbReference type="Rhea" id="RHEA-COMP:12674"/>
        <dbReference type="ChEBI" id="CHEBI:15378"/>
        <dbReference type="ChEBI" id="CHEBI:64720"/>
        <dbReference type="ChEBI" id="CHEBI:78442"/>
        <dbReference type="ChEBI" id="CHEBI:78494"/>
        <dbReference type="ChEBI" id="CHEBI:133042"/>
        <dbReference type="EC" id="2.3.2.29"/>
    </reaction>
</comment>
<comment type="subcellular location">
    <subcellularLocation>
        <location evidence="1">Cytoplasm</location>
    </subcellularLocation>
</comment>
<comment type="similarity">
    <text evidence="1">Belongs to the R-transferase family. Bpt subfamily.</text>
</comment>
<gene>
    <name evidence="1" type="primary">bpt</name>
    <name type="ordered locus">XOO1494</name>
</gene>
<organism>
    <name type="scientific">Xanthomonas oryzae pv. oryzae (strain MAFF 311018)</name>
    <dbReference type="NCBI Taxonomy" id="342109"/>
    <lineage>
        <taxon>Bacteria</taxon>
        <taxon>Pseudomonadati</taxon>
        <taxon>Pseudomonadota</taxon>
        <taxon>Gammaproteobacteria</taxon>
        <taxon>Lysobacterales</taxon>
        <taxon>Lysobacteraceae</taxon>
        <taxon>Xanthomonas</taxon>
    </lineage>
</organism>